<dbReference type="EMBL" id="AB000200">
    <property type="protein sequence ID" value="BAA19068.1"/>
    <property type="molecule type" value="mRNA"/>
</dbReference>
<dbReference type="EMBL" id="M27462">
    <property type="protein sequence ID" value="AAA57252.1"/>
    <property type="molecule type" value="mRNA"/>
</dbReference>
<dbReference type="PIR" id="A28576">
    <property type="entry name" value="TTHOA"/>
</dbReference>
<dbReference type="RefSeq" id="NP_001093233.1">
    <property type="nucleotide sequence ID" value="NM_001099763.1"/>
</dbReference>
<dbReference type="SMR" id="P01220"/>
<dbReference type="FunCoup" id="P01220">
    <property type="interactions" value="238"/>
</dbReference>
<dbReference type="STRING" id="9796.ENSECAP00000034031"/>
<dbReference type="GlyCosmos" id="P01220">
    <property type="glycosylation" value="2 sites, No reported glycans"/>
</dbReference>
<dbReference type="PaxDb" id="9796-ENSECAP00000034031"/>
<dbReference type="GeneID" id="100034174"/>
<dbReference type="KEGG" id="ecb:100034174"/>
<dbReference type="CTD" id="1081"/>
<dbReference type="InParanoid" id="P01220"/>
<dbReference type="OrthoDB" id="9852859at2759"/>
<dbReference type="Proteomes" id="UP000002281">
    <property type="component" value="Unplaced"/>
</dbReference>
<dbReference type="GO" id="GO:0005615">
    <property type="term" value="C:extracellular space"/>
    <property type="evidence" value="ECO:0000250"/>
    <property type="project" value="UniProtKB"/>
</dbReference>
<dbReference type="GO" id="GO:0016914">
    <property type="term" value="C:follicle-stimulating hormone complex"/>
    <property type="evidence" value="ECO:0000250"/>
    <property type="project" value="UniProtKB"/>
</dbReference>
<dbReference type="GO" id="GO:0016913">
    <property type="term" value="F:follicle-stimulating hormone activity"/>
    <property type="evidence" value="ECO:0000250"/>
    <property type="project" value="UniProtKB"/>
</dbReference>
<dbReference type="GO" id="GO:0007186">
    <property type="term" value="P:G protein-coupled receptor signaling pathway"/>
    <property type="evidence" value="ECO:0000250"/>
    <property type="project" value="UniProtKB"/>
</dbReference>
<dbReference type="GO" id="GO:0010893">
    <property type="term" value="P:positive regulation of steroid biosynthetic process"/>
    <property type="evidence" value="ECO:0000250"/>
    <property type="project" value="UniProtKB"/>
</dbReference>
<dbReference type="GO" id="GO:0010469">
    <property type="term" value="P:regulation of signaling receptor activity"/>
    <property type="evidence" value="ECO:0000250"/>
    <property type="project" value="UniProtKB"/>
</dbReference>
<dbReference type="GO" id="GO:0006590">
    <property type="term" value="P:thyroid hormone generation"/>
    <property type="evidence" value="ECO:0000318"/>
    <property type="project" value="GO_Central"/>
</dbReference>
<dbReference type="FunFam" id="2.10.90.10:FF:000011">
    <property type="entry name" value="Glycoprotein hormones alpha chain"/>
    <property type="match status" value="1"/>
</dbReference>
<dbReference type="Gene3D" id="2.10.90.10">
    <property type="entry name" value="Cystine-knot cytokines"/>
    <property type="match status" value="1"/>
</dbReference>
<dbReference type="InterPro" id="IPR029034">
    <property type="entry name" value="Cystine-knot_cytokine"/>
</dbReference>
<dbReference type="InterPro" id="IPR000476">
    <property type="entry name" value="Glyco_hormone"/>
</dbReference>
<dbReference type="PANTHER" id="PTHR11509">
    <property type="entry name" value="GLYCOPROTEIN HORMONE ALPHA CHAIN"/>
    <property type="match status" value="1"/>
</dbReference>
<dbReference type="PANTHER" id="PTHR11509:SF0">
    <property type="entry name" value="GLYCOPROTEIN HORMONES ALPHA CHAIN"/>
    <property type="match status" value="1"/>
</dbReference>
<dbReference type="Pfam" id="PF00236">
    <property type="entry name" value="Hormone_6"/>
    <property type="match status" value="1"/>
</dbReference>
<dbReference type="PRINTS" id="PR00274">
    <property type="entry name" value="GLYCOHORMONE"/>
</dbReference>
<dbReference type="SMART" id="SM00067">
    <property type="entry name" value="GHA"/>
    <property type="match status" value="1"/>
</dbReference>
<dbReference type="SUPFAM" id="SSF57501">
    <property type="entry name" value="Cystine-knot cytokines"/>
    <property type="match status" value="1"/>
</dbReference>
<dbReference type="PROSITE" id="PS00779">
    <property type="entry name" value="GLYCO_HORMONE_ALPHA_1"/>
    <property type="match status" value="1"/>
</dbReference>
<dbReference type="PROSITE" id="PS00780">
    <property type="entry name" value="GLYCO_HORMONE_ALPHA_2"/>
    <property type="match status" value="1"/>
</dbReference>
<dbReference type="PROSITE" id="PS50277">
    <property type="entry name" value="GLYCO_HORMONE_ALPHA_3"/>
    <property type="match status" value="1"/>
</dbReference>
<comment type="function">
    <text evidence="1">Shared alpha chain of the active heterodimeric glycoprotein hormones thyrotropin/thyroid stimulating hormone/TSH, lutropin/luteinizing hormone/LH and follitropin/follicle stimulating hormone/FSH. These hormones bind specific receptors on target cells that in turn activate downstream signaling pathways.</text>
</comment>
<comment type="subunit">
    <text evidence="1">Heterodimer. The active hormones thyrotropin, lutropin and follitropin are heterodimers composed of CGA, a common alpha chain described here and a unique beta chain which confers their biological specificity to the hormones: TSHB for thyrotropin, LHB for lutropin and FSHB for follitropin.</text>
</comment>
<comment type="subcellular location">
    <subcellularLocation>
        <location evidence="1">Secreted</location>
    </subcellularLocation>
</comment>
<comment type="similarity">
    <text evidence="2">Belongs to the glycoprotein hormones subunit alpha family.</text>
</comment>
<evidence type="ECO:0000250" key="1">
    <source>
        <dbReference type="UniProtKB" id="P01215"/>
    </source>
</evidence>
<evidence type="ECO:0000305" key="2"/>
<gene>
    <name type="primary">CGA</name>
</gene>
<proteinExistence type="evidence at protein level"/>
<keyword id="KW-0903">Direct protein sequencing</keyword>
<keyword id="KW-1015">Disulfide bond</keyword>
<keyword id="KW-0325">Glycoprotein</keyword>
<keyword id="KW-0372">Hormone</keyword>
<keyword id="KW-1185">Reference proteome</keyword>
<keyword id="KW-0964">Secreted</keyword>
<keyword id="KW-0732">Signal</keyword>
<reference key="1">
    <citation type="journal article" date="1994" name="J. Reprod. Dev.">
        <title>Nucleotide sequence of eCG alpha-subunit cDNA and its expression in the equine placenta.</title>
        <authorList>
            <person name="Min K."/>
            <person name="Shinozaki M."/>
            <person name="Miyazawa K."/>
            <person name="Nishimura R."/>
            <person name="Sasaki N."/>
            <person name="Shiota K."/>
            <person name="Ogawa T."/>
        </authorList>
    </citation>
    <scope>NUCLEOTIDE SEQUENCE [MRNA]</scope>
    <source>
        <strain>Hokkaido</strain>
        <tissue>Placenta</tissue>
    </source>
</reference>
<reference key="2">
    <citation type="journal article" date="1987" name="J. Endocrinol.">
        <title>Nucleotide (cDNA) sequence encoding the horse gonadotrophin alpha-subunit.</title>
        <authorList>
            <person name="Stewart F."/>
            <person name="Thomson J.A."/>
            <person name="Leigh S.E.A."/>
            <person name="Warwick J.M."/>
        </authorList>
    </citation>
    <scope>NUCLEOTIDE SEQUENCE [MRNA] OF 28-120</scope>
</reference>
<reference key="3">
    <citation type="journal article" date="1979" name="Fed. Proc.">
        <title>Primary structure of pregnant mare serum gonadotropin alpha subunit.</title>
        <authorList>
            <person name="Moore W.T. Jr."/>
            <person name="Ward D.N."/>
            <person name="Burleigh B.D."/>
        </authorList>
    </citation>
    <scope>PRELIMINARY PROTEIN SEQUENCE OF 25-120</scope>
</reference>
<reference key="4">
    <citation type="journal article" date="1978" name="J. Biol. Chem.">
        <title>Isolation and amino acid sequence of the alpha-subunit of follicle-stimulating hormone from equine pituitary glands.</title>
        <authorList>
            <person name="Rathnam P."/>
            <person name="Fujiki Y."/>
            <person name="Landefeld T.D."/>
            <person name="Saxena B.B."/>
        </authorList>
    </citation>
    <scope>PROTEIN SEQUENCE OF 39-120</scope>
</reference>
<protein>
    <recommendedName>
        <fullName>Glycoprotein hormones alpha chain</fullName>
    </recommendedName>
    <alternativeName>
        <fullName>Anterior pituitary glycoprotein hormones common subunit alpha</fullName>
    </alternativeName>
    <alternativeName>
        <fullName>Follicle-stimulating hormone alpha chain</fullName>
        <shortName>FSH-alpha</shortName>
    </alternativeName>
    <alternativeName>
        <fullName>Follitropin alpha chain</fullName>
    </alternativeName>
    <alternativeName>
        <fullName>Luteinizing hormone alpha chain</fullName>
        <shortName>LSH-alpha</shortName>
    </alternativeName>
    <alternativeName>
        <fullName>Lutropin alpha chain</fullName>
    </alternativeName>
    <alternativeName>
        <fullName>Thyroid-stimulating hormone alpha chain</fullName>
        <shortName>TSH-alpha</shortName>
    </alternativeName>
    <alternativeName>
        <fullName>Thyrotropin alpha chain</fullName>
    </alternativeName>
</protein>
<organism>
    <name type="scientific">Equus caballus</name>
    <name type="common">Horse</name>
    <dbReference type="NCBI Taxonomy" id="9796"/>
    <lineage>
        <taxon>Eukaryota</taxon>
        <taxon>Metazoa</taxon>
        <taxon>Chordata</taxon>
        <taxon>Craniata</taxon>
        <taxon>Vertebrata</taxon>
        <taxon>Euteleostomi</taxon>
        <taxon>Mammalia</taxon>
        <taxon>Eutheria</taxon>
        <taxon>Laurasiatheria</taxon>
        <taxon>Perissodactyla</taxon>
        <taxon>Equidae</taxon>
        <taxon>Equus</taxon>
    </lineage>
</organism>
<accession>P01220</accession>
<name>GLHA_HORSE</name>
<feature type="signal peptide">
    <location>
        <begin position="1"/>
        <end position="24"/>
    </location>
</feature>
<feature type="chain" id="PRO_0000011639" description="Glycoprotein hormones alpha chain">
    <location>
        <begin position="25"/>
        <end position="120"/>
    </location>
</feature>
<feature type="glycosylation site" description="N-linked (GlcNAc...) asparagine" evidence="1">
    <location>
        <position position="80"/>
    </location>
</feature>
<feature type="glycosylation site" description="N-linked (GlcNAc...) asparagine" evidence="1">
    <location>
        <position position="106"/>
    </location>
</feature>
<feature type="disulfide bond" evidence="1">
    <location>
        <begin position="35"/>
        <end position="59"/>
    </location>
</feature>
<feature type="disulfide bond" evidence="1">
    <location>
        <begin position="38"/>
        <end position="88"/>
    </location>
</feature>
<feature type="disulfide bond" evidence="1">
    <location>
        <begin position="56"/>
        <end position="110"/>
    </location>
</feature>
<feature type="disulfide bond" evidence="1">
    <location>
        <begin position="60"/>
        <end position="112"/>
    </location>
</feature>
<feature type="disulfide bond" evidence="1">
    <location>
        <begin position="87"/>
        <end position="115"/>
    </location>
</feature>
<feature type="sequence conflict" description="In Ref. 4; AA sequence." evidence="2" ref="4">
    <original>N</original>
    <variation>D</variation>
    <location>
        <position position="43"/>
    </location>
</feature>
<feature type="sequence conflict" description="In Ref. 4; AA sequence." evidence="2" ref="4">
    <original>K</original>
    <variation>M</variation>
    <location>
        <position position="57"/>
    </location>
</feature>
<feature type="sequence conflict" description="In Ref. 4; AA sequence." evidence="2" ref="4">
    <original>I</original>
    <variation>T</variation>
    <location>
        <position position="94"/>
    </location>
</feature>
<feature type="sequence conflict" description="In Ref. 4; AA sequence." evidence="2" ref="4">
    <original>L</original>
    <variation>S</variation>
    <location>
        <position position="104"/>
    </location>
</feature>
<sequence>MDYYRKHAAVILATLSVFLHILHSFPDGEFTTQDCPECKLRENKYFFKLGVPIYQCKGCCFSRAYPTPARSRKTMLVPKNITSESTCCVAKAFIRVTVMGNIKLENHTQCYCSTCYHHKI</sequence>